<sequence length="575" mass="65053">MKSPWRILVVSPLLLLPLHSSTSRAHDNQPGTIRSDHYTCVGCVLVVSVIEQLAQVHNSTVQASMERLCSYLPEEWVLKTACYMMVHVFGADIIKLFDKDVNADVVCHTLEFCKQEPGQPLCHLYPLPKESWKFTLEKARHIVKQSPIMKYTRSGAGICSLPFLAKICQKIKLAIKNSVPIKDVDSDKYSIFPTLRGYHWRGRDCNDSDKTVYPGRRPDNWDAHRDSNCNGIWGVDPKDGIPYEKKFCEGSQPRGIILLGDSAGAHFHIPPEWLTVSQMSVNSFLNLPTAVTNELDWPQLSGTTGFLDSASKIKENSIYLRLRKRNRCNHRDYQNISKNGASSRNVKSLIESLSRNQLLDHPAIVIYAMIGNDVCNGRKTDPVSAMTTPEQLYANVLKMLEALNSHLPTGSHVILYGLAHGAFLWDTLHSRYHPLGQLNKDVTYTQLYSFLGCLQVSPCPGWMSANETLRALTSERAQQLSETLRKIAASKKFTNFNLFYLDFAFQEVVEEWQKMGGQPWELIEAVDGFHPNEVALLLFADQLWEKVQRQWPDVLGKENPFNPQIEEVFGDQGGH</sequence>
<gene>
    <name evidence="2" type="primary">AOAH</name>
</gene>
<keyword id="KW-0002">3D-structure</keyword>
<keyword id="KW-0106">Calcium</keyword>
<keyword id="KW-0968">Cytoplasmic vesicle</keyword>
<keyword id="KW-1015">Disulfide bond</keyword>
<keyword id="KW-0325">Glycoprotein</keyword>
<keyword id="KW-0378">Hydrolase</keyword>
<keyword id="KW-0443">Lipid metabolism</keyword>
<keyword id="KW-0479">Metal-binding</keyword>
<keyword id="KW-1185">Reference proteome</keyword>
<keyword id="KW-0964">Secreted</keyword>
<keyword id="KW-0732">Signal</keyword>
<keyword id="KW-0865">Zymogen</keyword>
<comment type="function">
    <text evidence="1">Removes the secondary (acyloxyacyl-linked) fatty acyl chains from the lipid A region of bacterial lipopolysaccharides (LPS). By breaking down LPS, terminates the host response to bacterial infection and prevents prolonged and damaging inflammatory responses. In peritoneal macrophages, seems to be important for recovery from a state of immune tolerance following infection by Gram-negative bacteria.</text>
</comment>
<comment type="catalytic activity">
    <reaction evidence="2">
        <text>a 3-(acyloxy)acyl derivative of bacterial toxin + H2O = a 3-hydroxyacyl derivative of bacterial toxin + a fatty acid + H(+)</text>
        <dbReference type="Rhea" id="RHEA:12032"/>
        <dbReference type="ChEBI" id="CHEBI:15377"/>
        <dbReference type="ChEBI" id="CHEBI:15378"/>
        <dbReference type="ChEBI" id="CHEBI:28868"/>
        <dbReference type="ChEBI" id="CHEBI:136853"/>
        <dbReference type="ChEBI" id="CHEBI:140675"/>
        <dbReference type="EC" id="3.1.1.77"/>
    </reaction>
</comment>
<comment type="cofactor">
    <cofactor evidence="4">
        <name>Ca(2+)</name>
        <dbReference type="ChEBI" id="CHEBI:29108"/>
    </cofactor>
    <text evidence="4">Binds 3 Ca(2+) ions per subunit. The calcium ions probably have a structural role.</text>
</comment>
<comment type="subunit">
    <text evidence="4">Heterodimer of the large and small subunits; disulfide-linked.</text>
</comment>
<comment type="subcellular location">
    <subcellularLocation>
        <location evidence="2">Secreted</location>
    </subcellularLocation>
    <subcellularLocation>
        <location evidence="2">Cytoplasmic vesicle</location>
    </subcellularLocation>
    <text evidence="1">Detected in urine.</text>
</comment>
<comment type="PTM">
    <text evidence="2">Cleaved into a large and a small subunit.</text>
</comment>
<comment type="PTM">
    <text evidence="2">The small subunit is N-glycosylated.</text>
</comment>
<feature type="signal peptide" evidence="2">
    <location>
        <begin position="1"/>
        <end position="25"/>
    </location>
</feature>
<feature type="propeptide" id="PRO_0000041815" evidence="2">
    <location>
        <begin position="26"/>
        <end position="34"/>
    </location>
</feature>
<feature type="chain" id="PRO_0000041816" description="Acyloxyacyl hydrolase small subunit" evidence="2">
    <location>
        <begin position="35"/>
        <end position="156"/>
    </location>
</feature>
<feature type="chain" id="PRO_0000041817" description="Acyloxyacyl hydrolase large subunit" evidence="2">
    <location>
        <begin position="157"/>
        <end position="575"/>
    </location>
</feature>
<feature type="domain" description="Saposin B-type" evidence="3">
    <location>
        <begin position="36"/>
        <end position="117"/>
    </location>
</feature>
<feature type="region of interest" description="Important for enzyme activity, localization to cytoplasmic vesicles, and protein stability" evidence="2">
    <location>
        <begin position="37"/>
        <end position="69"/>
    </location>
</feature>
<feature type="region of interest" description="Lipopolysaccharide binding" evidence="5">
    <location>
        <begin position="172"/>
        <end position="176"/>
    </location>
</feature>
<feature type="active site" evidence="5">
    <location>
        <position position="262"/>
    </location>
</feature>
<feature type="binding site" evidence="4 6 7">
    <location>
        <position position="183"/>
    </location>
    <ligand>
        <name>Ca(2+)</name>
        <dbReference type="ChEBI" id="CHEBI:29108"/>
        <label>1</label>
    </ligand>
</feature>
<feature type="binding site" evidence="4 6 7">
    <location>
        <position position="185"/>
    </location>
    <ligand>
        <name>Ca(2+)</name>
        <dbReference type="ChEBI" id="CHEBI:29108"/>
        <label>1</label>
    </ligand>
</feature>
<feature type="binding site" evidence="4 6">
    <location>
        <position position="185"/>
    </location>
    <ligand>
        <name>Ca(2+)</name>
        <dbReference type="ChEBI" id="CHEBI:29108"/>
        <label>2</label>
    </ligand>
</feature>
<feature type="binding site" evidence="4 6 7">
    <location>
        <position position="187"/>
    </location>
    <ligand>
        <name>Ca(2+)</name>
        <dbReference type="ChEBI" id="CHEBI:29108"/>
        <label>1</label>
    </ligand>
</feature>
<feature type="binding site" evidence="4 6">
    <location>
        <position position="187"/>
    </location>
    <ligand>
        <name>Ca(2+)</name>
        <dbReference type="ChEBI" id="CHEBI:29108"/>
        <label>2</label>
    </ligand>
</feature>
<feature type="binding site" evidence="4 6 7">
    <location>
        <position position="189"/>
    </location>
    <ligand>
        <name>Ca(2+)</name>
        <dbReference type="ChEBI" id="CHEBI:29108"/>
        <label>1</label>
    </ligand>
</feature>
<feature type="binding site" evidence="4 7">
    <location>
        <position position="204"/>
    </location>
    <ligand>
        <name>Ca(2+)</name>
        <dbReference type="ChEBI" id="CHEBI:29108"/>
        <label>1</label>
    </ligand>
</feature>
<feature type="binding site" evidence="4 6">
    <location>
        <position position="204"/>
    </location>
    <ligand>
        <name>Ca(2+)</name>
        <dbReference type="ChEBI" id="CHEBI:29108"/>
        <label>2</label>
    </ligand>
</feature>
<feature type="binding site" evidence="4 6">
    <location>
        <position position="206"/>
    </location>
    <ligand>
        <name>Ca(2+)</name>
        <dbReference type="ChEBI" id="CHEBI:29108"/>
        <label>2</label>
    </ligand>
</feature>
<feature type="binding site" evidence="4 6 7">
    <location>
        <position position="207"/>
    </location>
    <ligand>
        <name>Ca(2+)</name>
        <dbReference type="ChEBI" id="CHEBI:29108"/>
        <label>1</label>
    </ligand>
</feature>
<feature type="binding site" evidence="4 6">
    <location>
        <position position="209"/>
    </location>
    <ligand>
        <name>Ca(2+)</name>
        <dbReference type="ChEBI" id="CHEBI:29108"/>
        <label>2</label>
    </ligand>
</feature>
<feature type="binding site" evidence="4 6">
    <location>
        <position position="212"/>
    </location>
    <ligand>
        <name>Ca(2+)</name>
        <dbReference type="ChEBI" id="CHEBI:29108"/>
        <label>2</label>
    </ligand>
</feature>
<feature type="binding site" evidence="4 6">
    <location>
        <position position="222"/>
    </location>
    <ligand>
        <name>Ca(2+)</name>
        <dbReference type="ChEBI" id="CHEBI:29108"/>
        <label>3</label>
    </ligand>
</feature>
<feature type="binding site" evidence="4 6">
    <location>
        <position position="226"/>
    </location>
    <ligand>
        <name>Ca(2+)</name>
        <dbReference type="ChEBI" id="CHEBI:29108"/>
        <label>3</label>
    </ligand>
</feature>
<feature type="binding site" evidence="4 6">
    <location>
        <position position="228"/>
    </location>
    <ligand>
        <name>Ca(2+)</name>
        <dbReference type="ChEBI" id="CHEBI:29108"/>
        <label>3</label>
    </ligand>
</feature>
<feature type="binding site" evidence="4 6">
    <location>
        <position position="230"/>
    </location>
    <ligand>
        <name>Ca(2+)</name>
        <dbReference type="ChEBI" id="CHEBI:29108"/>
        <label>3</label>
    </ligand>
</feature>
<feature type="binding site" evidence="4 6">
    <location>
        <position position="232"/>
    </location>
    <ligand>
        <name>Ca(2+)</name>
        <dbReference type="ChEBI" id="CHEBI:29108"/>
        <label>3</label>
    </ligand>
</feature>
<feature type="binding site" evidence="4 6">
    <location>
        <position position="244"/>
    </location>
    <ligand>
        <name>Ca(2+)</name>
        <dbReference type="ChEBI" id="CHEBI:29108"/>
        <label>3</label>
    </ligand>
</feature>
<feature type="site" description="Interacts with lipopolysaccharide" evidence="5">
    <location>
        <position position="344"/>
    </location>
</feature>
<feature type="site" description="Interacts with lipopolysaccharide" evidence="5">
    <location>
        <position position="378"/>
    </location>
</feature>
<feature type="glycosylation site" description="N-linked (GlcNAc...) asparagine" evidence="4 7">
    <location>
        <position position="58"/>
    </location>
</feature>
<feature type="glycosylation site" description="N-linked (GlcNAc...) asparagine" evidence="4 7">
    <location>
        <position position="206"/>
    </location>
</feature>
<feature type="glycosylation site" description="N-linked (GlcNAc...) asparagine" evidence="4 7">
    <location>
        <position position="466"/>
    </location>
</feature>
<feature type="disulfide bond" evidence="3 4 6 7">
    <location>
        <begin position="40"/>
        <end position="113"/>
    </location>
</feature>
<feature type="disulfide bond" evidence="3 4 6 7">
    <location>
        <begin position="43"/>
        <end position="107"/>
    </location>
</feature>
<feature type="disulfide bond" evidence="3 4 6 7">
    <location>
        <begin position="69"/>
        <end position="82"/>
    </location>
</feature>
<feature type="disulfide bond" description="Interchain (between small and large subunit)" evidence="4 6 7">
    <location>
        <begin position="122"/>
        <end position="453"/>
    </location>
</feature>
<feature type="disulfide bond" evidence="4 7">
    <location>
        <begin position="159"/>
        <end position="168"/>
    </location>
</feature>
<feature type="disulfide bond" evidence="4 6 7">
    <location>
        <begin position="205"/>
        <end position="229"/>
    </location>
</feature>
<feature type="disulfide bond" evidence="4 6 7">
    <location>
        <begin position="248"/>
        <end position="328"/>
    </location>
</feature>
<feature type="disulfide bond" evidence="4 6 7">
    <location>
        <begin position="375"/>
        <end position="459"/>
    </location>
</feature>
<feature type="mutagenesis site" description="Loss of catalytic activity." evidence="4">
    <original>S</original>
    <variation>A</variation>
    <location>
        <position position="262"/>
    </location>
</feature>
<feature type="helix" evidence="9">
    <location>
        <begin position="37"/>
        <end position="56"/>
    </location>
</feature>
<feature type="helix" evidence="9">
    <location>
        <begin position="61"/>
        <end position="71"/>
    </location>
</feature>
<feature type="helix" evidence="9">
    <location>
        <begin position="75"/>
        <end position="77"/>
    </location>
</feature>
<feature type="helix" evidence="9">
    <location>
        <begin position="78"/>
        <end position="94"/>
    </location>
</feature>
<feature type="helix" evidence="8">
    <location>
        <begin position="95"/>
        <end position="97"/>
    </location>
</feature>
<feature type="helix" evidence="9">
    <location>
        <begin position="103"/>
        <end position="109"/>
    </location>
</feature>
<feature type="helix" evidence="9">
    <location>
        <begin position="162"/>
        <end position="177"/>
    </location>
</feature>
<feature type="strand" evidence="9">
    <location>
        <begin position="191"/>
        <end position="194"/>
    </location>
</feature>
<feature type="turn" evidence="9">
    <location>
        <begin position="198"/>
        <end position="200"/>
    </location>
</feature>
<feature type="helix" evidence="9">
    <location>
        <begin position="219"/>
        <end position="222"/>
    </location>
</feature>
<feature type="strand" evidence="9">
    <location>
        <begin position="223"/>
        <end position="225"/>
    </location>
</feature>
<feature type="strand" evidence="9">
    <location>
        <begin position="229"/>
        <end position="231"/>
    </location>
</feature>
<feature type="turn" evidence="9">
    <location>
        <begin position="237"/>
        <end position="239"/>
    </location>
</feature>
<feature type="helix" evidence="9">
    <location>
        <begin position="243"/>
        <end position="248"/>
    </location>
</feature>
<feature type="strand" evidence="8">
    <location>
        <begin position="249"/>
        <end position="251"/>
    </location>
</feature>
<feature type="strand" evidence="9">
    <location>
        <begin position="255"/>
        <end position="260"/>
    </location>
</feature>
<feature type="helix" evidence="9">
    <location>
        <begin position="262"/>
        <end position="265"/>
    </location>
</feature>
<feature type="helix" evidence="9">
    <location>
        <begin position="271"/>
        <end position="273"/>
    </location>
</feature>
<feature type="helix" evidence="9">
    <location>
        <begin position="276"/>
        <end position="278"/>
    </location>
</feature>
<feature type="turn" evidence="9">
    <location>
        <begin position="281"/>
        <end position="286"/>
    </location>
</feature>
<feature type="helix" evidence="9">
    <location>
        <begin position="287"/>
        <end position="292"/>
    </location>
</feature>
<feature type="turn" evidence="9">
    <location>
        <begin position="293"/>
        <end position="295"/>
    </location>
</feature>
<feature type="helix" evidence="9">
    <location>
        <begin position="298"/>
        <end position="300"/>
    </location>
</feature>
<feature type="turn" evidence="9">
    <location>
        <begin position="302"/>
        <end position="304"/>
    </location>
</feature>
<feature type="helix" evidence="9">
    <location>
        <begin position="318"/>
        <end position="325"/>
    </location>
</feature>
<feature type="helix" evidence="9">
    <location>
        <begin position="327"/>
        <end position="329"/>
    </location>
</feature>
<feature type="strand" evidence="9">
    <location>
        <begin position="333"/>
        <end position="335"/>
    </location>
</feature>
<feature type="turn" evidence="9">
    <location>
        <begin position="343"/>
        <end position="345"/>
    </location>
</feature>
<feature type="helix" evidence="9">
    <location>
        <begin position="346"/>
        <end position="352"/>
    </location>
</feature>
<feature type="turn" evidence="9">
    <location>
        <begin position="357"/>
        <end position="359"/>
    </location>
</feature>
<feature type="strand" evidence="9">
    <location>
        <begin position="363"/>
        <end position="368"/>
    </location>
</feature>
<feature type="turn" evidence="9">
    <location>
        <begin position="372"/>
        <end position="374"/>
    </location>
</feature>
<feature type="helix" evidence="9">
    <location>
        <begin position="382"/>
        <end position="385"/>
    </location>
</feature>
<feature type="helix" evidence="9">
    <location>
        <begin position="389"/>
        <end position="404"/>
    </location>
</feature>
<feature type="strand" evidence="9">
    <location>
        <begin position="411"/>
        <end position="416"/>
    </location>
</feature>
<feature type="helix" evidence="9">
    <location>
        <begin position="423"/>
        <end position="428"/>
    </location>
</feature>
<feature type="helix" evidence="9">
    <location>
        <begin position="434"/>
        <end position="436"/>
    </location>
</feature>
<feature type="turn" evidence="9">
    <location>
        <begin position="437"/>
        <end position="440"/>
    </location>
</feature>
<feature type="helix" evidence="9">
    <location>
        <begin position="444"/>
        <end position="453"/>
    </location>
</feature>
<feature type="turn" evidence="9">
    <location>
        <begin position="460"/>
        <end position="462"/>
    </location>
</feature>
<feature type="helix" evidence="9">
    <location>
        <begin position="467"/>
        <end position="490"/>
    </location>
</feature>
<feature type="strand" evidence="9">
    <location>
        <begin position="496"/>
        <end position="501"/>
    </location>
</feature>
<feature type="helix" evidence="9">
    <location>
        <begin position="505"/>
        <end position="514"/>
    </location>
</feature>
<feature type="helix" evidence="9">
    <location>
        <begin position="519"/>
        <end position="522"/>
    </location>
</feature>
<feature type="turn" evidence="9">
    <location>
        <begin position="525"/>
        <end position="527"/>
    </location>
</feature>
<feature type="strand" evidence="9">
    <location>
        <begin position="528"/>
        <end position="531"/>
    </location>
</feature>
<feature type="helix" evidence="9">
    <location>
        <begin position="533"/>
        <end position="550"/>
    </location>
</feature>
<feature type="helix" evidence="9">
    <location>
        <begin position="552"/>
        <end position="555"/>
    </location>
</feature>
<feature type="helix" evidence="9">
    <location>
        <begin position="562"/>
        <end position="569"/>
    </location>
</feature>
<feature type="turn" evidence="9">
    <location>
        <begin position="570"/>
        <end position="573"/>
    </location>
</feature>
<organism>
    <name type="scientific">Oryctolagus cuniculus</name>
    <name type="common">Rabbit</name>
    <dbReference type="NCBI Taxonomy" id="9986"/>
    <lineage>
        <taxon>Eukaryota</taxon>
        <taxon>Metazoa</taxon>
        <taxon>Chordata</taxon>
        <taxon>Craniata</taxon>
        <taxon>Vertebrata</taxon>
        <taxon>Euteleostomi</taxon>
        <taxon>Mammalia</taxon>
        <taxon>Eutheria</taxon>
        <taxon>Euarchontoglires</taxon>
        <taxon>Glires</taxon>
        <taxon>Lagomorpha</taxon>
        <taxon>Leporidae</taxon>
        <taxon>Oryctolagus</taxon>
    </lineage>
</organism>
<dbReference type="EC" id="3.1.1.77" evidence="2"/>
<dbReference type="EMBL" id="AF018173">
    <property type="protein sequence ID" value="AAB81183.1"/>
    <property type="molecule type" value="mRNA"/>
</dbReference>
<dbReference type="RefSeq" id="NP_001075494.1">
    <property type="nucleotide sequence ID" value="NM_001082025.1"/>
</dbReference>
<dbReference type="PDB" id="5W7A">
    <property type="method" value="X-ray"/>
    <property type="resolution" value="2.30 A"/>
    <property type="chains" value="A=23-153, B=154-575"/>
</dbReference>
<dbReference type="PDB" id="5W7B">
    <property type="method" value="X-ray"/>
    <property type="resolution" value="1.90 A"/>
    <property type="chains" value="A/B=23-153, C/D=154-575"/>
</dbReference>
<dbReference type="PDBsum" id="5W7A"/>
<dbReference type="PDBsum" id="5W7B"/>
<dbReference type="SMR" id="O18823"/>
<dbReference type="FunCoup" id="O18823">
    <property type="interactions" value="43"/>
</dbReference>
<dbReference type="STRING" id="9986.ENSOCUP00000044232"/>
<dbReference type="GlyCosmos" id="O18823">
    <property type="glycosylation" value="3 sites, No reported glycans"/>
</dbReference>
<dbReference type="iPTMnet" id="O18823"/>
<dbReference type="PaxDb" id="9986-ENSOCUP00000012523"/>
<dbReference type="GeneID" id="100008662"/>
<dbReference type="KEGG" id="ocu:100008662"/>
<dbReference type="CTD" id="313"/>
<dbReference type="eggNOG" id="ENOG502QVQW">
    <property type="taxonomic scope" value="Eukaryota"/>
</dbReference>
<dbReference type="HOGENOM" id="CLU_025769_0_0_1"/>
<dbReference type="InParanoid" id="O18823"/>
<dbReference type="OMA" id="PFCHLYP"/>
<dbReference type="OrthoDB" id="14839at2759"/>
<dbReference type="TreeFam" id="TF329246"/>
<dbReference type="Proteomes" id="UP000001811">
    <property type="component" value="Unplaced"/>
</dbReference>
<dbReference type="GO" id="GO:0031410">
    <property type="term" value="C:cytoplasmic vesicle"/>
    <property type="evidence" value="ECO:0007669"/>
    <property type="project" value="UniProtKB-KW"/>
</dbReference>
<dbReference type="GO" id="GO:0005576">
    <property type="term" value="C:extracellular region"/>
    <property type="evidence" value="ECO:0007669"/>
    <property type="project" value="UniProtKB-SubCell"/>
</dbReference>
<dbReference type="GO" id="GO:0050528">
    <property type="term" value="F:acyloxyacyl hydrolase activity"/>
    <property type="evidence" value="ECO:0000250"/>
    <property type="project" value="UniProtKB"/>
</dbReference>
<dbReference type="GO" id="GO:0005509">
    <property type="term" value="F:calcium ion binding"/>
    <property type="evidence" value="ECO:0000314"/>
    <property type="project" value="UniProtKB"/>
</dbReference>
<dbReference type="GO" id="GO:0006631">
    <property type="term" value="P:fatty acid metabolic process"/>
    <property type="evidence" value="ECO:0000250"/>
    <property type="project" value="UniProtKB"/>
</dbReference>
<dbReference type="GO" id="GO:0009104">
    <property type="term" value="P:lipopolysaccharide catabolic process"/>
    <property type="evidence" value="ECO:0000250"/>
    <property type="project" value="UniProtKB"/>
</dbReference>
<dbReference type="GO" id="GO:0050728">
    <property type="term" value="P:negative regulation of inflammatory response"/>
    <property type="evidence" value="ECO:0007669"/>
    <property type="project" value="TreeGrafter"/>
</dbReference>
<dbReference type="CDD" id="cd01826">
    <property type="entry name" value="acyloxyacyl_hydrolase_like"/>
    <property type="match status" value="1"/>
</dbReference>
<dbReference type="FunFam" id="1.10.225.10:FF:000009">
    <property type="entry name" value="Acyloxyacyl hydrolase"/>
    <property type="match status" value="1"/>
</dbReference>
<dbReference type="Gene3D" id="1.10.225.10">
    <property type="entry name" value="Saposin-like"/>
    <property type="match status" value="1"/>
</dbReference>
<dbReference type="Gene3D" id="3.40.50.1110">
    <property type="entry name" value="SGNH hydrolase"/>
    <property type="match status" value="1"/>
</dbReference>
<dbReference type="InterPro" id="IPR039676">
    <property type="entry name" value="AOAH"/>
</dbReference>
<dbReference type="InterPro" id="IPR048593">
    <property type="entry name" value="AOAH_Saposin_N"/>
</dbReference>
<dbReference type="InterPro" id="IPR001087">
    <property type="entry name" value="GDSL"/>
</dbReference>
<dbReference type="InterPro" id="IPR011001">
    <property type="entry name" value="Saposin-like"/>
</dbReference>
<dbReference type="InterPro" id="IPR008139">
    <property type="entry name" value="SaposinB_dom"/>
</dbReference>
<dbReference type="InterPro" id="IPR036514">
    <property type="entry name" value="SGNH_hydro_sf"/>
</dbReference>
<dbReference type="PANTHER" id="PTHR15010">
    <property type="entry name" value="ACYLOXYACYL HYDROLASE"/>
    <property type="match status" value="1"/>
</dbReference>
<dbReference type="PANTHER" id="PTHR15010:SF0">
    <property type="entry name" value="ACYLOXYACYL HYDROLASE"/>
    <property type="match status" value="1"/>
</dbReference>
<dbReference type="Pfam" id="PF00657">
    <property type="entry name" value="Lipase_GDSL"/>
    <property type="match status" value="1"/>
</dbReference>
<dbReference type="Pfam" id="PF20825">
    <property type="entry name" value="Saposin"/>
    <property type="match status" value="1"/>
</dbReference>
<dbReference type="SMART" id="SM00741">
    <property type="entry name" value="SapB"/>
    <property type="match status" value="1"/>
</dbReference>
<dbReference type="SUPFAM" id="SSF47862">
    <property type="entry name" value="Saposin"/>
    <property type="match status" value="1"/>
</dbReference>
<dbReference type="SUPFAM" id="SSF52266">
    <property type="entry name" value="SGNH hydrolase"/>
    <property type="match status" value="1"/>
</dbReference>
<dbReference type="PROSITE" id="PS50015">
    <property type="entry name" value="SAP_B"/>
    <property type="match status" value="1"/>
</dbReference>
<evidence type="ECO:0000250" key="1">
    <source>
        <dbReference type="UniProtKB" id="O35298"/>
    </source>
</evidence>
<evidence type="ECO:0000250" key="2">
    <source>
        <dbReference type="UniProtKB" id="P28039"/>
    </source>
</evidence>
<evidence type="ECO:0000255" key="3">
    <source>
        <dbReference type="PROSITE-ProRule" id="PRU00415"/>
    </source>
</evidence>
<evidence type="ECO:0000269" key="4">
    <source>
    </source>
</evidence>
<evidence type="ECO:0000305" key="5">
    <source>
    </source>
</evidence>
<evidence type="ECO:0007744" key="6">
    <source>
        <dbReference type="PDB" id="5W7A"/>
    </source>
</evidence>
<evidence type="ECO:0007744" key="7">
    <source>
        <dbReference type="PDB" id="5W7B"/>
    </source>
</evidence>
<evidence type="ECO:0007829" key="8">
    <source>
        <dbReference type="PDB" id="5W7A"/>
    </source>
</evidence>
<evidence type="ECO:0007829" key="9">
    <source>
        <dbReference type="PDB" id="5W7B"/>
    </source>
</evidence>
<reference key="1">
    <citation type="submission" date="1997-08" db="EMBL/GenBank/DDBJ databases">
        <title>Human, murine, and lapine acyloxyacyl hydrolases share unique structural features.</title>
        <authorList>
            <person name="Munford R.S."/>
            <person name="Fosmire S."/>
            <person name="Varley A.W."/>
            <person name="Staab J.F."/>
        </authorList>
    </citation>
    <scope>NUCLEOTIDE SEQUENCE [MRNA]</scope>
    <source>
        <strain>New Zealand white</strain>
    </source>
</reference>
<reference evidence="6 7" key="2">
    <citation type="journal article" date="2018" name="Proc. Natl. Acad. Sci. U.S.A.">
        <title>Crystal structure of the mammalian lipopolysaccharide detoxifier.</title>
        <authorList>
            <person name="Gorelik A."/>
            <person name="Illes K."/>
            <person name="Nagar B."/>
        </authorList>
    </citation>
    <scope>X-RAY CRYSTALLOGRAPHY (1.90 ANGSTROMS) OF 23-153 AND 154-575 OF MUTANT ALA-262 IN COMPLEX WITH CALCIUM AND BACTERIAL LIPOPOLYSACCHARIDE</scope>
    <scope>COFACTOR</scope>
    <scope>SUBUNIT</scope>
    <scope>GLYCOSYLATION AT ASN-58; ASN-206 AND ASN-466</scope>
    <scope>DISULFIDE BONDS</scope>
    <scope>MUTAGENESIS OF SER-262</scope>
    <scope>ACTIVE SITE</scope>
</reference>
<proteinExistence type="evidence at protein level"/>
<protein>
    <recommendedName>
        <fullName evidence="2">Acyloxyacyl hydrolase</fullName>
        <ecNumber evidence="2">3.1.1.77</ecNumber>
    </recommendedName>
    <component>
        <recommendedName>
            <fullName evidence="2">Acyloxyacyl hydrolase small subunit</fullName>
        </recommendedName>
    </component>
    <component>
        <recommendedName>
            <fullName evidence="2">Acyloxyacyl hydrolase large subunit</fullName>
        </recommendedName>
    </component>
</protein>
<accession>O18823</accession>
<name>AOAH_RABIT</name>